<reference key="1">
    <citation type="journal article" date="2008" name="J. Bacteriol.">
        <title>Genome sequence of Staphylococcus aureus strain Newman and comparative analysis of staphylococcal genomes: polymorphism and evolution of two major pathogenicity islands.</title>
        <authorList>
            <person name="Baba T."/>
            <person name="Bae T."/>
            <person name="Schneewind O."/>
            <person name="Takeuchi F."/>
            <person name="Hiramatsu K."/>
        </authorList>
    </citation>
    <scope>NUCLEOTIDE SEQUENCE [LARGE SCALE GENOMIC DNA]</scope>
    <source>
        <strain>Newman</strain>
    </source>
</reference>
<name>KDPB_STAAE</name>
<dbReference type="EC" id="7.2.2.6" evidence="1"/>
<dbReference type="EMBL" id="AP009351">
    <property type="protein sequence ID" value="BAF68253.1"/>
    <property type="molecule type" value="Genomic_DNA"/>
</dbReference>
<dbReference type="RefSeq" id="WP_000546584.1">
    <property type="nucleotide sequence ID" value="NZ_JBBIAE010000008.1"/>
</dbReference>
<dbReference type="SMR" id="A6QIS1"/>
<dbReference type="KEGG" id="sae:NWMN_1981"/>
<dbReference type="HOGENOM" id="CLU_025728_2_0_9"/>
<dbReference type="Proteomes" id="UP000006386">
    <property type="component" value="Chromosome"/>
</dbReference>
<dbReference type="GO" id="GO:0005886">
    <property type="term" value="C:plasma membrane"/>
    <property type="evidence" value="ECO:0007669"/>
    <property type="project" value="UniProtKB-SubCell"/>
</dbReference>
<dbReference type="GO" id="GO:0005524">
    <property type="term" value="F:ATP binding"/>
    <property type="evidence" value="ECO:0007669"/>
    <property type="project" value="UniProtKB-UniRule"/>
</dbReference>
<dbReference type="GO" id="GO:0016887">
    <property type="term" value="F:ATP hydrolysis activity"/>
    <property type="evidence" value="ECO:0007669"/>
    <property type="project" value="InterPro"/>
</dbReference>
<dbReference type="GO" id="GO:0000287">
    <property type="term" value="F:magnesium ion binding"/>
    <property type="evidence" value="ECO:0007669"/>
    <property type="project" value="UniProtKB-UniRule"/>
</dbReference>
<dbReference type="GO" id="GO:0008556">
    <property type="term" value="F:P-type potassium transmembrane transporter activity"/>
    <property type="evidence" value="ECO:0007669"/>
    <property type="project" value="UniProtKB-UniRule"/>
</dbReference>
<dbReference type="FunFam" id="2.70.150.10:FF:000010">
    <property type="entry name" value="Potassium-transporting ATPase ATP-binding subunit"/>
    <property type="match status" value="1"/>
</dbReference>
<dbReference type="FunFam" id="3.40.1110.10:FF:000007">
    <property type="entry name" value="Potassium-transporting ATPase ATP-binding subunit"/>
    <property type="match status" value="1"/>
</dbReference>
<dbReference type="Gene3D" id="3.40.1110.10">
    <property type="entry name" value="Calcium-transporting ATPase, cytoplasmic domain N"/>
    <property type="match status" value="1"/>
</dbReference>
<dbReference type="Gene3D" id="2.70.150.10">
    <property type="entry name" value="Calcium-transporting ATPase, cytoplasmic transduction domain A"/>
    <property type="match status" value="1"/>
</dbReference>
<dbReference type="Gene3D" id="3.40.50.1000">
    <property type="entry name" value="HAD superfamily/HAD-like"/>
    <property type="match status" value="1"/>
</dbReference>
<dbReference type="HAMAP" id="MF_00285">
    <property type="entry name" value="KdpB"/>
    <property type="match status" value="1"/>
</dbReference>
<dbReference type="InterPro" id="IPR023299">
    <property type="entry name" value="ATPase_P-typ_cyto_dom_N"/>
</dbReference>
<dbReference type="InterPro" id="IPR018303">
    <property type="entry name" value="ATPase_P-typ_P_site"/>
</dbReference>
<dbReference type="InterPro" id="IPR023298">
    <property type="entry name" value="ATPase_P-typ_TM_dom_sf"/>
</dbReference>
<dbReference type="InterPro" id="IPR008250">
    <property type="entry name" value="ATPase_P-typ_transduc_dom_A_sf"/>
</dbReference>
<dbReference type="InterPro" id="IPR036412">
    <property type="entry name" value="HAD-like_sf"/>
</dbReference>
<dbReference type="InterPro" id="IPR023214">
    <property type="entry name" value="HAD_sf"/>
</dbReference>
<dbReference type="InterPro" id="IPR006391">
    <property type="entry name" value="P-type_ATPase_bsu_IA"/>
</dbReference>
<dbReference type="InterPro" id="IPR001757">
    <property type="entry name" value="P_typ_ATPase"/>
</dbReference>
<dbReference type="InterPro" id="IPR044492">
    <property type="entry name" value="P_typ_ATPase_HD_dom"/>
</dbReference>
<dbReference type="NCBIfam" id="TIGR01494">
    <property type="entry name" value="ATPase_P-type"/>
    <property type="match status" value="2"/>
</dbReference>
<dbReference type="NCBIfam" id="TIGR01497">
    <property type="entry name" value="kdpB"/>
    <property type="match status" value="1"/>
</dbReference>
<dbReference type="PANTHER" id="PTHR43743">
    <property type="entry name" value="POTASSIUM-TRANSPORTING ATPASE ATP-BINDING SUBUNIT"/>
    <property type="match status" value="1"/>
</dbReference>
<dbReference type="PANTHER" id="PTHR43743:SF1">
    <property type="entry name" value="POTASSIUM-TRANSPORTING ATPASE ATP-BINDING SUBUNIT"/>
    <property type="match status" value="1"/>
</dbReference>
<dbReference type="Pfam" id="PF00122">
    <property type="entry name" value="E1-E2_ATPase"/>
    <property type="match status" value="1"/>
</dbReference>
<dbReference type="Pfam" id="PF00702">
    <property type="entry name" value="Hydrolase"/>
    <property type="match status" value="1"/>
</dbReference>
<dbReference type="PRINTS" id="PR00119">
    <property type="entry name" value="CATATPASE"/>
</dbReference>
<dbReference type="SFLD" id="SFLDG00002">
    <property type="entry name" value="C1.7:_P-type_atpase_like"/>
    <property type="match status" value="1"/>
</dbReference>
<dbReference type="SFLD" id="SFLDF00027">
    <property type="entry name" value="p-type_atpase"/>
    <property type="match status" value="1"/>
</dbReference>
<dbReference type="SUPFAM" id="SSF81653">
    <property type="entry name" value="Calcium ATPase, transduction domain A"/>
    <property type="match status" value="1"/>
</dbReference>
<dbReference type="SUPFAM" id="SSF81665">
    <property type="entry name" value="Calcium ATPase, transmembrane domain M"/>
    <property type="match status" value="1"/>
</dbReference>
<dbReference type="SUPFAM" id="SSF56784">
    <property type="entry name" value="HAD-like"/>
    <property type="match status" value="1"/>
</dbReference>
<dbReference type="PROSITE" id="PS00154">
    <property type="entry name" value="ATPASE_E1_E2"/>
    <property type="match status" value="1"/>
</dbReference>
<evidence type="ECO:0000255" key="1">
    <source>
        <dbReference type="HAMAP-Rule" id="MF_00285"/>
    </source>
</evidence>
<comment type="function">
    <text evidence="1">Part of the high-affinity ATP-driven potassium transport (or Kdp) system, which catalyzes the hydrolysis of ATP coupled with the electrogenic transport of potassium into the cytoplasm. This subunit is responsible for energy coupling to the transport system and for the release of the potassium ions to the cytoplasm.</text>
</comment>
<comment type="catalytic activity">
    <reaction evidence="1">
        <text>K(+)(out) + ATP + H2O = K(+)(in) + ADP + phosphate + H(+)</text>
        <dbReference type="Rhea" id="RHEA:16777"/>
        <dbReference type="ChEBI" id="CHEBI:15377"/>
        <dbReference type="ChEBI" id="CHEBI:15378"/>
        <dbReference type="ChEBI" id="CHEBI:29103"/>
        <dbReference type="ChEBI" id="CHEBI:30616"/>
        <dbReference type="ChEBI" id="CHEBI:43474"/>
        <dbReference type="ChEBI" id="CHEBI:456216"/>
        <dbReference type="EC" id="7.2.2.6"/>
    </reaction>
    <physiologicalReaction direction="left-to-right" evidence="1">
        <dbReference type="Rhea" id="RHEA:16778"/>
    </physiologicalReaction>
</comment>
<comment type="subunit">
    <text evidence="1">The system is composed of three essential subunits: KdpA, KdpB and KdpC.</text>
</comment>
<comment type="subcellular location">
    <subcellularLocation>
        <location evidence="1">Cell membrane</location>
        <topology evidence="1">Multi-pass membrane protein</topology>
    </subcellularLocation>
</comment>
<comment type="similarity">
    <text evidence="1">Belongs to the cation transport ATPase (P-type) (TC 3.A.3) family. Type IA subfamily.</text>
</comment>
<proteinExistence type="inferred from homology"/>
<sequence>MHHVNKYFNQTMVIEALKMSFYKLNLKQLIKNPIMFVVEVGMILTLILICFPDIFGTSYLSRGYLITIFIILLITILFANFSEAFAEGRGKAQADSLRQAQSNLTARLIEENGAYRIVNATELKAGQNIRVENGETIPADGVVINGLATVDESAITGESAPVIKESGGDFDGVIGGTLVTSDWLEIRVESEAGTSFLDKMIALVEGAERNKTPNEIALFTLLTTLTIIFLVVIVTLYPIASYLHLILPIAMLIALTVCLIPTTIGGLLSAIGIAGMDRVTQFNVLAKSGRAVEVCGDVDVMILDKTGTITYGNRIASEFLPVNQQMLEKLIVAAYMSSIYDDTPEGKSIVRLAKQMYINELPKDIDGTYKPFTAETRMSGIITNEISVFKGAPNSMINLVKQQQGNIPLNIESLCMDVSSKGGTPLIVIENNVMLGVIYLKDVIKDGLVERFTELRKMGIETVMCTGDNALTAATIAKEAGVDRFVAECKPEDKIKVIKDEQAKGHIVAMTGDGTNDAPALAQANIGLAMNSGTISAKEAANLIDLDSNPTKLIEVVKIGKQLLMTRGALTTFSLANDVAKYFAILPALMMSTIPEMTSLNIMHLSSPKSAIISALIFNALIIVALIPIAMKGVKVKGYSIDRIFINNMLIYGLGGLIVPFLGIKLIDMIVQFFV</sequence>
<keyword id="KW-0067">ATP-binding</keyword>
<keyword id="KW-1003">Cell membrane</keyword>
<keyword id="KW-0406">Ion transport</keyword>
<keyword id="KW-0460">Magnesium</keyword>
<keyword id="KW-0472">Membrane</keyword>
<keyword id="KW-0479">Metal-binding</keyword>
<keyword id="KW-0547">Nucleotide-binding</keyword>
<keyword id="KW-0597">Phosphoprotein</keyword>
<keyword id="KW-0630">Potassium</keyword>
<keyword id="KW-0633">Potassium transport</keyword>
<keyword id="KW-1278">Translocase</keyword>
<keyword id="KW-0812">Transmembrane</keyword>
<keyword id="KW-1133">Transmembrane helix</keyword>
<keyword id="KW-0813">Transport</keyword>
<accession>A6QIS1</accession>
<feature type="chain" id="PRO_1000071940" description="Potassium-transporting ATPase ATP-binding subunit">
    <location>
        <begin position="1"/>
        <end position="675"/>
    </location>
</feature>
<feature type="transmembrane region" description="Helical" evidence="1">
    <location>
        <begin position="34"/>
        <end position="54"/>
    </location>
</feature>
<feature type="transmembrane region" description="Helical" evidence="1">
    <location>
        <begin position="65"/>
        <end position="85"/>
    </location>
</feature>
<feature type="transmembrane region" description="Helical" evidence="1">
    <location>
        <begin position="216"/>
        <end position="236"/>
    </location>
</feature>
<feature type="transmembrane region" description="Helical" evidence="1">
    <location>
        <begin position="245"/>
        <end position="265"/>
    </location>
</feature>
<feature type="transmembrane region" description="Helical" evidence="1">
    <location>
        <begin position="569"/>
        <end position="591"/>
    </location>
</feature>
<feature type="transmembrane region" description="Helical" evidence="1">
    <location>
        <begin position="611"/>
        <end position="631"/>
    </location>
</feature>
<feature type="transmembrane region" description="Helical" evidence="1">
    <location>
        <begin position="644"/>
        <end position="664"/>
    </location>
</feature>
<feature type="active site" description="4-aspartylphosphate intermediate" evidence="1">
    <location>
        <position position="304"/>
    </location>
</feature>
<feature type="binding site" evidence="1">
    <location>
        <position position="341"/>
    </location>
    <ligand>
        <name>ATP</name>
        <dbReference type="ChEBI" id="CHEBI:30616"/>
    </ligand>
</feature>
<feature type="binding site" evidence="1">
    <location>
        <position position="345"/>
    </location>
    <ligand>
        <name>ATP</name>
        <dbReference type="ChEBI" id="CHEBI:30616"/>
    </ligand>
</feature>
<feature type="binding site" evidence="1">
    <location>
        <begin position="372"/>
        <end position="379"/>
    </location>
    <ligand>
        <name>ATP</name>
        <dbReference type="ChEBI" id="CHEBI:30616"/>
    </ligand>
</feature>
<feature type="binding site" evidence="1">
    <location>
        <position position="390"/>
    </location>
    <ligand>
        <name>ATP</name>
        <dbReference type="ChEBI" id="CHEBI:30616"/>
    </ligand>
</feature>
<feature type="binding site" evidence="1">
    <location>
        <position position="513"/>
    </location>
    <ligand>
        <name>Mg(2+)</name>
        <dbReference type="ChEBI" id="CHEBI:18420"/>
    </ligand>
</feature>
<feature type="binding site" evidence="1">
    <location>
        <position position="517"/>
    </location>
    <ligand>
        <name>Mg(2+)</name>
        <dbReference type="ChEBI" id="CHEBI:18420"/>
    </ligand>
</feature>
<gene>
    <name evidence="1" type="primary">kdpB</name>
    <name type="ordered locus">NWMN_1981</name>
</gene>
<organism>
    <name type="scientific">Staphylococcus aureus (strain Newman)</name>
    <dbReference type="NCBI Taxonomy" id="426430"/>
    <lineage>
        <taxon>Bacteria</taxon>
        <taxon>Bacillati</taxon>
        <taxon>Bacillota</taxon>
        <taxon>Bacilli</taxon>
        <taxon>Bacillales</taxon>
        <taxon>Staphylococcaceae</taxon>
        <taxon>Staphylococcus</taxon>
    </lineage>
</organism>
<protein>
    <recommendedName>
        <fullName evidence="1">Potassium-transporting ATPase ATP-binding subunit</fullName>
        <ecNumber evidence="1">7.2.2.6</ecNumber>
    </recommendedName>
    <alternativeName>
        <fullName evidence="1">ATP phosphohydrolase [potassium-transporting] B chain</fullName>
    </alternativeName>
    <alternativeName>
        <fullName evidence="1">Potassium-binding and translocating subunit B</fullName>
    </alternativeName>
    <alternativeName>
        <fullName evidence="1">Potassium-translocating ATPase B chain</fullName>
    </alternativeName>
</protein>